<proteinExistence type="inferred from homology"/>
<organism>
    <name type="scientific">Klebsiella pneumoniae subsp. pneumoniae (strain ATCC 700721 / MGH 78578)</name>
    <dbReference type="NCBI Taxonomy" id="272620"/>
    <lineage>
        <taxon>Bacteria</taxon>
        <taxon>Pseudomonadati</taxon>
        <taxon>Pseudomonadota</taxon>
        <taxon>Gammaproteobacteria</taxon>
        <taxon>Enterobacterales</taxon>
        <taxon>Enterobacteriaceae</taxon>
        <taxon>Klebsiella/Raoultella group</taxon>
        <taxon>Klebsiella</taxon>
        <taxon>Klebsiella pneumoniae complex</taxon>
    </lineage>
</organism>
<evidence type="ECO:0000255" key="1">
    <source>
        <dbReference type="HAMAP-Rule" id="MF_00181"/>
    </source>
</evidence>
<sequence length="503" mass="54848">MEFSVKSGSPEKQRSACIVVGVFEPRRLSPIAEQLDKISDGYISALLRRGELEGKPGQTLLLHHVPNILSERILLIGCGKERELDERQYKQVIQKTINTLNDTGSMEAVCFLTELHVKGRNNYWKVRQAVETAKETLYSFDQLKTNKSEPRRPLRKMVFNVPTRRELTSGERAIQHGLAIAAGIKAAKDLGNMPPNICNAAYLASQARQLADTYSKNVITRVIGEQQMRELGMNAYLAVGNGSQNESLMSVIEYKGNPAEDARPIVLVGKGLTFDSGGISIKPAEGMDEMKYDMCGAAAVYGVMRMVAELQLPLNVIGVLAGCENMPGGRAYRPGDVLTTMSGQTVEVLNTDAEGRLVLCDVLTYVERFEPEAVIDVATLTGACVIALGHHITGLMSNHNPLAHELIGASELAGDRAWRLPLADEFQDQLESNFADMANIGGRPGGAITAGCFLSRFTRKYNWAHLDIAGTAWRSGKAKGATGRPVALLSQFLLNRAGFNGEE</sequence>
<dbReference type="EC" id="3.4.11.1" evidence="1"/>
<dbReference type="EC" id="3.4.11.10" evidence="1"/>
<dbReference type="EMBL" id="CP000647">
    <property type="protein sequence ID" value="ABR80016.1"/>
    <property type="molecule type" value="Genomic_DNA"/>
</dbReference>
<dbReference type="RefSeq" id="WP_002886954.1">
    <property type="nucleotide sequence ID" value="NC_009648.1"/>
</dbReference>
<dbReference type="SMR" id="A6THI2"/>
<dbReference type="STRING" id="272620.KPN_04665"/>
<dbReference type="MEROPS" id="M17.003"/>
<dbReference type="jPOST" id="A6THI2"/>
<dbReference type="PaxDb" id="272620-KPN_04665"/>
<dbReference type="EnsemblBacteria" id="ABR80016">
    <property type="protein sequence ID" value="ABR80016"/>
    <property type="gene ID" value="KPN_04665"/>
</dbReference>
<dbReference type="GeneID" id="69757436"/>
<dbReference type="KEGG" id="kpn:KPN_04665"/>
<dbReference type="HOGENOM" id="CLU_013734_2_2_6"/>
<dbReference type="Proteomes" id="UP000000265">
    <property type="component" value="Chromosome"/>
</dbReference>
<dbReference type="GO" id="GO:0005737">
    <property type="term" value="C:cytoplasm"/>
    <property type="evidence" value="ECO:0007669"/>
    <property type="project" value="UniProtKB-SubCell"/>
</dbReference>
<dbReference type="GO" id="GO:0030145">
    <property type="term" value="F:manganese ion binding"/>
    <property type="evidence" value="ECO:0007669"/>
    <property type="project" value="UniProtKB-UniRule"/>
</dbReference>
<dbReference type="GO" id="GO:0070006">
    <property type="term" value="F:metalloaminopeptidase activity"/>
    <property type="evidence" value="ECO:0007669"/>
    <property type="project" value="InterPro"/>
</dbReference>
<dbReference type="GO" id="GO:0006508">
    <property type="term" value="P:proteolysis"/>
    <property type="evidence" value="ECO:0007669"/>
    <property type="project" value="UniProtKB-KW"/>
</dbReference>
<dbReference type="CDD" id="cd00433">
    <property type="entry name" value="Peptidase_M17"/>
    <property type="match status" value="1"/>
</dbReference>
<dbReference type="FunFam" id="3.40.220.10:FF:000001">
    <property type="entry name" value="Probable cytosol aminopeptidase"/>
    <property type="match status" value="1"/>
</dbReference>
<dbReference type="FunFam" id="3.40.630.10:FF:000004">
    <property type="entry name" value="Probable cytosol aminopeptidase"/>
    <property type="match status" value="1"/>
</dbReference>
<dbReference type="Gene3D" id="3.40.220.10">
    <property type="entry name" value="Leucine Aminopeptidase, subunit E, domain 1"/>
    <property type="match status" value="1"/>
</dbReference>
<dbReference type="Gene3D" id="3.40.630.10">
    <property type="entry name" value="Zn peptidases"/>
    <property type="match status" value="1"/>
</dbReference>
<dbReference type="HAMAP" id="MF_00181">
    <property type="entry name" value="Cytosol_peptidase_M17"/>
    <property type="match status" value="1"/>
</dbReference>
<dbReference type="InterPro" id="IPR011356">
    <property type="entry name" value="Leucine_aapep/pepB"/>
</dbReference>
<dbReference type="InterPro" id="IPR043472">
    <property type="entry name" value="Macro_dom-like"/>
</dbReference>
<dbReference type="InterPro" id="IPR000819">
    <property type="entry name" value="Peptidase_M17_C"/>
</dbReference>
<dbReference type="InterPro" id="IPR023042">
    <property type="entry name" value="Peptidase_M17_leu_NH2_pept"/>
</dbReference>
<dbReference type="InterPro" id="IPR008283">
    <property type="entry name" value="Peptidase_M17_N"/>
</dbReference>
<dbReference type="NCBIfam" id="NF002072">
    <property type="entry name" value="PRK00913.1-1"/>
    <property type="match status" value="1"/>
</dbReference>
<dbReference type="NCBIfam" id="NF002074">
    <property type="entry name" value="PRK00913.1-4"/>
    <property type="match status" value="1"/>
</dbReference>
<dbReference type="PANTHER" id="PTHR11963:SF23">
    <property type="entry name" value="CYTOSOL AMINOPEPTIDASE"/>
    <property type="match status" value="1"/>
</dbReference>
<dbReference type="PANTHER" id="PTHR11963">
    <property type="entry name" value="LEUCINE AMINOPEPTIDASE-RELATED"/>
    <property type="match status" value="1"/>
</dbReference>
<dbReference type="Pfam" id="PF00883">
    <property type="entry name" value="Peptidase_M17"/>
    <property type="match status" value="1"/>
</dbReference>
<dbReference type="Pfam" id="PF02789">
    <property type="entry name" value="Peptidase_M17_N"/>
    <property type="match status" value="1"/>
</dbReference>
<dbReference type="PRINTS" id="PR00481">
    <property type="entry name" value="LAMNOPPTDASE"/>
</dbReference>
<dbReference type="SUPFAM" id="SSF52949">
    <property type="entry name" value="Macro domain-like"/>
    <property type="match status" value="1"/>
</dbReference>
<dbReference type="SUPFAM" id="SSF53187">
    <property type="entry name" value="Zn-dependent exopeptidases"/>
    <property type="match status" value="1"/>
</dbReference>
<dbReference type="PROSITE" id="PS00631">
    <property type="entry name" value="CYTOSOL_AP"/>
    <property type="match status" value="1"/>
</dbReference>
<reference key="1">
    <citation type="submission" date="2006-09" db="EMBL/GenBank/DDBJ databases">
        <authorList>
            <consortium name="The Klebsiella pneumonia Genome Sequencing Project"/>
            <person name="McClelland M."/>
            <person name="Sanderson E.K."/>
            <person name="Spieth J."/>
            <person name="Clifton W.S."/>
            <person name="Latreille P."/>
            <person name="Sabo A."/>
            <person name="Pepin K."/>
            <person name="Bhonagiri V."/>
            <person name="Porwollik S."/>
            <person name="Ali J."/>
            <person name="Wilson R.K."/>
        </authorList>
    </citation>
    <scope>NUCLEOTIDE SEQUENCE [LARGE SCALE GENOMIC DNA]</scope>
    <source>
        <strain>ATCC 700721 / MGH 78578</strain>
    </source>
</reference>
<feature type="chain" id="PRO_1000019931" description="Probable cytosol aminopeptidase">
    <location>
        <begin position="1"/>
        <end position="503"/>
    </location>
</feature>
<feature type="active site" evidence="1">
    <location>
        <position position="282"/>
    </location>
</feature>
<feature type="active site" evidence="1">
    <location>
        <position position="356"/>
    </location>
</feature>
<feature type="binding site" evidence="1">
    <location>
        <position position="270"/>
    </location>
    <ligand>
        <name>Mn(2+)</name>
        <dbReference type="ChEBI" id="CHEBI:29035"/>
        <label>2</label>
    </ligand>
</feature>
<feature type="binding site" evidence="1">
    <location>
        <position position="275"/>
    </location>
    <ligand>
        <name>Mn(2+)</name>
        <dbReference type="ChEBI" id="CHEBI:29035"/>
        <label>1</label>
    </ligand>
</feature>
<feature type="binding site" evidence="1">
    <location>
        <position position="275"/>
    </location>
    <ligand>
        <name>Mn(2+)</name>
        <dbReference type="ChEBI" id="CHEBI:29035"/>
        <label>2</label>
    </ligand>
</feature>
<feature type="binding site" evidence="1">
    <location>
        <position position="293"/>
    </location>
    <ligand>
        <name>Mn(2+)</name>
        <dbReference type="ChEBI" id="CHEBI:29035"/>
        <label>2</label>
    </ligand>
</feature>
<feature type="binding site" evidence="1">
    <location>
        <position position="352"/>
    </location>
    <ligand>
        <name>Mn(2+)</name>
        <dbReference type="ChEBI" id="CHEBI:29035"/>
        <label>1</label>
    </ligand>
</feature>
<feature type="binding site" evidence="1">
    <location>
        <position position="354"/>
    </location>
    <ligand>
        <name>Mn(2+)</name>
        <dbReference type="ChEBI" id="CHEBI:29035"/>
        <label>1</label>
    </ligand>
</feature>
<feature type="binding site" evidence="1">
    <location>
        <position position="354"/>
    </location>
    <ligand>
        <name>Mn(2+)</name>
        <dbReference type="ChEBI" id="CHEBI:29035"/>
        <label>2</label>
    </ligand>
</feature>
<gene>
    <name evidence="1" type="primary">pepA</name>
    <name type="ordered locus">KPN78578_45920</name>
    <name type="ORF">KPN_04665</name>
</gene>
<protein>
    <recommendedName>
        <fullName evidence="1">Probable cytosol aminopeptidase</fullName>
        <ecNumber evidence="1">3.4.11.1</ecNumber>
    </recommendedName>
    <alternativeName>
        <fullName evidence="1">Leucine aminopeptidase</fullName>
        <shortName evidence="1">LAP</shortName>
        <ecNumber evidence="1">3.4.11.10</ecNumber>
    </alternativeName>
    <alternativeName>
        <fullName evidence="1">Leucyl aminopeptidase</fullName>
    </alternativeName>
</protein>
<accession>A6THI2</accession>
<name>AMPA_KLEP7</name>
<comment type="function">
    <text evidence="1">Presumably involved in the processing and regular turnover of intracellular proteins. Catalyzes the removal of unsubstituted N-terminal amino acids from various peptides.</text>
</comment>
<comment type="catalytic activity">
    <reaction evidence="1">
        <text>Release of an N-terminal amino acid, Xaa-|-Yaa-, in which Xaa is preferably Leu, but may be other amino acids including Pro although not Arg or Lys, and Yaa may be Pro. Amino acid amides and methyl esters are also readily hydrolyzed, but rates on arylamides are exceedingly low.</text>
        <dbReference type="EC" id="3.4.11.1"/>
    </reaction>
</comment>
<comment type="catalytic activity">
    <reaction evidence="1">
        <text>Release of an N-terminal amino acid, preferentially leucine, but not glutamic or aspartic acids.</text>
        <dbReference type="EC" id="3.4.11.10"/>
    </reaction>
</comment>
<comment type="cofactor">
    <cofactor evidence="1">
        <name>Mn(2+)</name>
        <dbReference type="ChEBI" id="CHEBI:29035"/>
    </cofactor>
    <text evidence="1">Binds 2 manganese ions per subunit.</text>
</comment>
<comment type="subcellular location">
    <subcellularLocation>
        <location evidence="1">Cytoplasm</location>
    </subcellularLocation>
</comment>
<comment type="similarity">
    <text evidence="1">Belongs to the peptidase M17 family.</text>
</comment>
<keyword id="KW-0031">Aminopeptidase</keyword>
<keyword id="KW-0963">Cytoplasm</keyword>
<keyword id="KW-0378">Hydrolase</keyword>
<keyword id="KW-0464">Manganese</keyword>
<keyword id="KW-0479">Metal-binding</keyword>
<keyword id="KW-0645">Protease</keyword>